<evidence type="ECO:0000255" key="1">
    <source>
        <dbReference type="HAMAP-Rule" id="MF_01718"/>
    </source>
</evidence>
<feature type="chain" id="PRO_0000269603" description="Hemin import ATP-binding protein HmuV">
    <location>
        <begin position="1"/>
        <end position="269"/>
    </location>
</feature>
<feature type="domain" description="ABC transporter" evidence="1">
    <location>
        <begin position="5"/>
        <end position="242"/>
    </location>
</feature>
<feature type="binding site" evidence="1">
    <location>
        <begin position="37"/>
        <end position="44"/>
    </location>
    <ligand>
        <name>ATP</name>
        <dbReference type="ChEBI" id="CHEBI:30616"/>
    </ligand>
</feature>
<name>HMUV_NITWN</name>
<organism>
    <name type="scientific">Nitrobacter winogradskyi (strain ATCC 25391 / DSM 10237 / CIP 104748 / NCIMB 11846 / Nb-255)</name>
    <dbReference type="NCBI Taxonomy" id="323098"/>
    <lineage>
        <taxon>Bacteria</taxon>
        <taxon>Pseudomonadati</taxon>
        <taxon>Pseudomonadota</taxon>
        <taxon>Alphaproteobacteria</taxon>
        <taxon>Hyphomicrobiales</taxon>
        <taxon>Nitrobacteraceae</taxon>
        <taxon>Nitrobacter</taxon>
    </lineage>
</organism>
<sequence length="269" mass="28730">MRPIIETHSVTMRINGATLVDGIDLSVGSGEMVAIVGPNGAGKSTLLRLLSGDLQPTQGRIELKQADLRSYSAAQLATHRATLSQHVNVTFPFTVEEIVRMGAGDMAIAAAHPLVESAMDEVAIRPLRSRQLPTLSGGEQQRTHFARVLVQLACGEARHGPGLLLLDEPTSSLDLRHQIELVEIAGRRARNGTAVIAILHDLNLAVRFASRIIVIHRGAIVADGPPAQTITDGLIRKVFEVCADIQYHGDGSPVLLPQAMKSIGPGNLL</sequence>
<dbReference type="EC" id="7.6.2.-" evidence="1"/>
<dbReference type="EMBL" id="CP000115">
    <property type="protein sequence ID" value="ABA05576.1"/>
    <property type="molecule type" value="Genomic_DNA"/>
</dbReference>
<dbReference type="RefSeq" id="WP_011315541.1">
    <property type="nucleotide sequence ID" value="NC_007406.1"/>
</dbReference>
<dbReference type="SMR" id="Q3SQ65"/>
<dbReference type="STRING" id="323098.Nwi_2322"/>
<dbReference type="KEGG" id="nwi:Nwi_2322"/>
<dbReference type="eggNOG" id="COG4559">
    <property type="taxonomic scope" value="Bacteria"/>
</dbReference>
<dbReference type="HOGENOM" id="CLU_000604_1_11_5"/>
<dbReference type="OrthoDB" id="9810077at2"/>
<dbReference type="Proteomes" id="UP000002531">
    <property type="component" value="Chromosome"/>
</dbReference>
<dbReference type="GO" id="GO:0005886">
    <property type="term" value="C:plasma membrane"/>
    <property type="evidence" value="ECO:0007669"/>
    <property type="project" value="UniProtKB-SubCell"/>
</dbReference>
<dbReference type="GO" id="GO:0005524">
    <property type="term" value="F:ATP binding"/>
    <property type="evidence" value="ECO:0007669"/>
    <property type="project" value="UniProtKB-KW"/>
</dbReference>
<dbReference type="GO" id="GO:0016887">
    <property type="term" value="F:ATP hydrolysis activity"/>
    <property type="evidence" value="ECO:0007669"/>
    <property type="project" value="InterPro"/>
</dbReference>
<dbReference type="CDD" id="cd03214">
    <property type="entry name" value="ABC_Iron-Siderophores_B12_Hemin"/>
    <property type="match status" value="1"/>
</dbReference>
<dbReference type="Gene3D" id="3.40.50.300">
    <property type="entry name" value="P-loop containing nucleotide triphosphate hydrolases"/>
    <property type="match status" value="1"/>
</dbReference>
<dbReference type="InterPro" id="IPR003593">
    <property type="entry name" value="AAA+_ATPase"/>
</dbReference>
<dbReference type="InterPro" id="IPR003439">
    <property type="entry name" value="ABC_transporter-like_ATP-bd"/>
</dbReference>
<dbReference type="InterPro" id="IPR027417">
    <property type="entry name" value="P-loop_NTPase"/>
</dbReference>
<dbReference type="NCBIfam" id="NF010068">
    <property type="entry name" value="PRK13548.1"/>
    <property type="match status" value="1"/>
</dbReference>
<dbReference type="PANTHER" id="PTHR42794">
    <property type="entry name" value="HEMIN IMPORT ATP-BINDING PROTEIN HMUV"/>
    <property type="match status" value="1"/>
</dbReference>
<dbReference type="PANTHER" id="PTHR42794:SF1">
    <property type="entry name" value="HEMIN IMPORT ATP-BINDING PROTEIN HMUV"/>
    <property type="match status" value="1"/>
</dbReference>
<dbReference type="Pfam" id="PF00005">
    <property type="entry name" value="ABC_tran"/>
    <property type="match status" value="1"/>
</dbReference>
<dbReference type="SMART" id="SM00382">
    <property type="entry name" value="AAA"/>
    <property type="match status" value="1"/>
</dbReference>
<dbReference type="SUPFAM" id="SSF52540">
    <property type="entry name" value="P-loop containing nucleoside triphosphate hydrolases"/>
    <property type="match status" value="1"/>
</dbReference>
<dbReference type="PROSITE" id="PS50893">
    <property type="entry name" value="ABC_TRANSPORTER_2"/>
    <property type="match status" value="1"/>
</dbReference>
<dbReference type="PROSITE" id="PS51261">
    <property type="entry name" value="HMUV"/>
    <property type="match status" value="1"/>
</dbReference>
<protein>
    <recommendedName>
        <fullName evidence="1">Hemin import ATP-binding protein HmuV</fullName>
        <ecNumber evidence="1">7.6.2.-</ecNumber>
    </recommendedName>
</protein>
<proteinExistence type="inferred from homology"/>
<accession>Q3SQ65</accession>
<keyword id="KW-0067">ATP-binding</keyword>
<keyword id="KW-0997">Cell inner membrane</keyword>
<keyword id="KW-1003">Cell membrane</keyword>
<keyword id="KW-0472">Membrane</keyword>
<keyword id="KW-0547">Nucleotide-binding</keyword>
<keyword id="KW-1185">Reference proteome</keyword>
<keyword id="KW-1278">Translocase</keyword>
<keyword id="KW-0813">Transport</keyword>
<reference key="1">
    <citation type="journal article" date="2006" name="Appl. Environ. Microbiol.">
        <title>Genome sequence of the chemolithoautotrophic nitrite-oxidizing bacterium Nitrobacter winogradskyi Nb-255.</title>
        <authorList>
            <person name="Starkenburg S.R."/>
            <person name="Chain P.S.G."/>
            <person name="Sayavedra-Soto L.A."/>
            <person name="Hauser L."/>
            <person name="Land M.L."/>
            <person name="Larimer F.W."/>
            <person name="Malfatti S.A."/>
            <person name="Klotz M.G."/>
            <person name="Bottomley P.J."/>
            <person name="Arp D.J."/>
            <person name="Hickey W.J."/>
        </authorList>
    </citation>
    <scope>NUCLEOTIDE SEQUENCE [LARGE SCALE GENOMIC DNA]</scope>
    <source>
        <strain>ATCC 25391 / DSM 10237 / CIP 104748 / NCIMB 11846 / Nb-255</strain>
    </source>
</reference>
<comment type="function">
    <text evidence="1">Part of the ABC transporter complex HmuTUV involved in hemin import. Responsible for energy coupling to the transport system.</text>
</comment>
<comment type="subunit">
    <text evidence="1">The complex is composed of two ATP-binding proteins (HmuV), two transmembrane proteins (HmuU) and a solute-binding protein (HmuT).</text>
</comment>
<comment type="subcellular location">
    <subcellularLocation>
        <location evidence="1">Cell inner membrane</location>
        <topology evidence="1">Peripheral membrane protein</topology>
    </subcellularLocation>
</comment>
<comment type="similarity">
    <text evidence="1">Belongs to the ABC transporter superfamily. Heme (hemin) importer (TC 3.A.1.14.5) family.</text>
</comment>
<gene>
    <name evidence="1" type="primary">hmuV</name>
    <name type="ordered locus">Nwi_2322</name>
</gene>